<name>FTHS_LEUCK</name>
<feature type="chain" id="PRO_1000196813" description="Formate--tetrahydrofolate ligase">
    <location>
        <begin position="1"/>
        <end position="554"/>
    </location>
</feature>
<feature type="binding site" evidence="1">
    <location>
        <begin position="64"/>
        <end position="71"/>
    </location>
    <ligand>
        <name>ATP</name>
        <dbReference type="ChEBI" id="CHEBI:30616"/>
    </ligand>
</feature>
<protein>
    <recommendedName>
        <fullName evidence="1">Formate--tetrahydrofolate ligase</fullName>
        <ecNumber evidence="1">6.3.4.3</ecNumber>
    </recommendedName>
    <alternativeName>
        <fullName evidence="1">Formyltetrahydrofolate synthetase</fullName>
        <shortName evidence="1">FHS</shortName>
        <shortName evidence="1">FTHFS</shortName>
    </alternativeName>
</protein>
<comment type="catalytic activity">
    <reaction evidence="1">
        <text>(6S)-5,6,7,8-tetrahydrofolate + formate + ATP = (6R)-10-formyltetrahydrofolate + ADP + phosphate</text>
        <dbReference type="Rhea" id="RHEA:20221"/>
        <dbReference type="ChEBI" id="CHEBI:15740"/>
        <dbReference type="ChEBI" id="CHEBI:30616"/>
        <dbReference type="ChEBI" id="CHEBI:43474"/>
        <dbReference type="ChEBI" id="CHEBI:57453"/>
        <dbReference type="ChEBI" id="CHEBI:195366"/>
        <dbReference type="ChEBI" id="CHEBI:456216"/>
        <dbReference type="EC" id="6.3.4.3"/>
    </reaction>
</comment>
<comment type="pathway">
    <text evidence="1">One-carbon metabolism; tetrahydrofolate interconversion.</text>
</comment>
<comment type="similarity">
    <text evidence="1">Belongs to the formate--tetrahydrofolate ligase family.</text>
</comment>
<gene>
    <name evidence="1" type="primary">fhs</name>
    <name type="ordered locus">LCK_00614</name>
</gene>
<dbReference type="EC" id="6.3.4.3" evidence="1"/>
<dbReference type="EMBL" id="DQ489736">
    <property type="protein sequence ID" value="ACA82447.1"/>
    <property type="molecule type" value="Genomic_DNA"/>
</dbReference>
<dbReference type="RefSeq" id="WP_004903508.1">
    <property type="nucleotide sequence ID" value="NC_010471.1"/>
</dbReference>
<dbReference type="SMR" id="B1MY45"/>
<dbReference type="STRING" id="349519.LCK_00614"/>
<dbReference type="KEGG" id="lci:LCK_00614"/>
<dbReference type="eggNOG" id="COG2759">
    <property type="taxonomic scope" value="Bacteria"/>
</dbReference>
<dbReference type="HOGENOM" id="CLU_003601_3_3_9"/>
<dbReference type="OrthoDB" id="9761733at2"/>
<dbReference type="UniPathway" id="UPA00193"/>
<dbReference type="Proteomes" id="UP000002166">
    <property type="component" value="Chromosome"/>
</dbReference>
<dbReference type="GO" id="GO:0005524">
    <property type="term" value="F:ATP binding"/>
    <property type="evidence" value="ECO:0007669"/>
    <property type="project" value="UniProtKB-UniRule"/>
</dbReference>
<dbReference type="GO" id="GO:0004329">
    <property type="term" value="F:formate-tetrahydrofolate ligase activity"/>
    <property type="evidence" value="ECO:0007669"/>
    <property type="project" value="UniProtKB-UniRule"/>
</dbReference>
<dbReference type="GO" id="GO:0035999">
    <property type="term" value="P:tetrahydrofolate interconversion"/>
    <property type="evidence" value="ECO:0007669"/>
    <property type="project" value="UniProtKB-UniRule"/>
</dbReference>
<dbReference type="CDD" id="cd00477">
    <property type="entry name" value="FTHFS"/>
    <property type="match status" value="1"/>
</dbReference>
<dbReference type="FunFam" id="3.30.1510.10:FF:000001">
    <property type="entry name" value="Formate--tetrahydrofolate ligase"/>
    <property type="match status" value="1"/>
</dbReference>
<dbReference type="FunFam" id="3.10.410.10:FF:000001">
    <property type="entry name" value="Putative formate--tetrahydrofolate ligase"/>
    <property type="match status" value="1"/>
</dbReference>
<dbReference type="Gene3D" id="3.30.1510.10">
    <property type="entry name" value="Domain 2, N(10)-formyltetrahydrofolate synthetase"/>
    <property type="match status" value="1"/>
</dbReference>
<dbReference type="Gene3D" id="3.10.410.10">
    <property type="entry name" value="Formyltetrahydrofolate synthetase, domain 3"/>
    <property type="match status" value="1"/>
</dbReference>
<dbReference type="Gene3D" id="3.40.50.300">
    <property type="entry name" value="P-loop containing nucleotide triphosphate hydrolases"/>
    <property type="match status" value="1"/>
</dbReference>
<dbReference type="HAMAP" id="MF_01543">
    <property type="entry name" value="FTHFS"/>
    <property type="match status" value="1"/>
</dbReference>
<dbReference type="InterPro" id="IPR000559">
    <property type="entry name" value="Formate_THF_ligase"/>
</dbReference>
<dbReference type="InterPro" id="IPR020628">
    <property type="entry name" value="Formate_THF_ligase_CS"/>
</dbReference>
<dbReference type="InterPro" id="IPR027417">
    <property type="entry name" value="P-loop_NTPase"/>
</dbReference>
<dbReference type="NCBIfam" id="NF010030">
    <property type="entry name" value="PRK13505.1"/>
    <property type="match status" value="1"/>
</dbReference>
<dbReference type="Pfam" id="PF01268">
    <property type="entry name" value="FTHFS"/>
    <property type="match status" value="1"/>
</dbReference>
<dbReference type="SUPFAM" id="SSF52540">
    <property type="entry name" value="P-loop containing nucleoside triphosphate hydrolases"/>
    <property type="match status" value="1"/>
</dbReference>
<dbReference type="PROSITE" id="PS00722">
    <property type="entry name" value="FTHFS_2"/>
    <property type="match status" value="1"/>
</dbReference>
<keyword id="KW-0067">ATP-binding</keyword>
<keyword id="KW-0436">Ligase</keyword>
<keyword id="KW-0547">Nucleotide-binding</keyword>
<keyword id="KW-0554">One-carbon metabolism</keyword>
<keyword id="KW-1185">Reference proteome</keyword>
<sequence length="554" mass="58270">MQTDIAIAQSAEILPITQIAEKAGLKPNEILPYGYDKAKIKLDPTISRKKDLGKLILVTSINPTPAGEGKSTVTVGLADALALAGKKTMIALREPSLGPVMGMKGGATGGGMSQVIPMADINLHFTGDFHALTAAHDTLAAVVDNSLQQGNPLNIDPRRIIWKRVLDINDRALRHITIGMGGPTSGVPREDGFDITVASELMAILTLSTDLMDLKARVARIVVGYTYDKVPVTVADLGVSGALAVLLKDAIMPNLVQTLAHTPAIIHGGPFANIAQGTNSILATKTALQLADYTVTEGGFGADLGGEKFLDVKVPILGKTPDTIVVVATVRALKHHGGVALADLNNENLTALAAGLENLGQHLKAMGRYGVPVVVAINRFSADTDSEIQAIKDYAQAFGAAAYTTTVWAEGGAGAQDLAAAVIEAADQEADYTPLYQPENEAIDKLNAIVTTIYGGLGVELSATAQKQLMAFKAQGWDKLPIIMAKTQYSFSDDPKRLGAPKDFVIHVREFVPKLGAGFLVAMTGSILTMPGLPKHPAALDIDIDETGKITGLF</sequence>
<organism>
    <name type="scientific">Leuconostoc citreum (strain KM20)</name>
    <dbReference type="NCBI Taxonomy" id="349519"/>
    <lineage>
        <taxon>Bacteria</taxon>
        <taxon>Bacillati</taxon>
        <taxon>Bacillota</taxon>
        <taxon>Bacilli</taxon>
        <taxon>Lactobacillales</taxon>
        <taxon>Lactobacillaceae</taxon>
        <taxon>Leuconostoc</taxon>
    </lineage>
</organism>
<accession>B1MY45</accession>
<evidence type="ECO:0000255" key="1">
    <source>
        <dbReference type="HAMAP-Rule" id="MF_01543"/>
    </source>
</evidence>
<proteinExistence type="inferred from homology"/>
<reference key="1">
    <citation type="journal article" date="2008" name="J. Bacteriol.">
        <title>Complete genome sequence of Leuconostoc citreum KM20.</title>
        <authorList>
            <person name="Kim J.F."/>
            <person name="Jeong H."/>
            <person name="Lee J.-S."/>
            <person name="Choi S.-H."/>
            <person name="Ha M."/>
            <person name="Hur C.-G."/>
            <person name="Kim J.-S."/>
            <person name="Lee S."/>
            <person name="Park H.-S."/>
            <person name="Park Y.-H."/>
            <person name="Oh T.K."/>
        </authorList>
    </citation>
    <scope>NUCLEOTIDE SEQUENCE [LARGE SCALE GENOMIC DNA]</scope>
    <source>
        <strain>KM20</strain>
    </source>
</reference>